<sequence length="193" mass="22917">MNFLAHLHLAHLADSSLSGNLLADFVRGNPATHYPPDVVEGIYMHRRIDVMTDNLPEVREAREWFRHETRRVAPITLDVMWDHFLSRHWTQISPDFPLQAFVGYAHAQVATILPDSPPRFVNLNDYLWSEKWLERYRDMDFIQNVLNGMANRRPRLDALRDSWYDLDAHYDALEERFWHFYPRMMAQAARKAL</sequence>
<evidence type="ECO:0000255" key="1">
    <source>
        <dbReference type="HAMAP-Rule" id="MF_01950"/>
    </source>
</evidence>
<accession>Q8XEZ8</accession>
<accession>Q7ANH4</accession>
<keyword id="KW-0275">Fatty acid biosynthesis</keyword>
<keyword id="KW-0276">Fatty acid metabolism</keyword>
<keyword id="KW-0378">Hydrolase</keyword>
<keyword id="KW-0444">Lipid biosynthesis</keyword>
<keyword id="KW-0443">Lipid metabolism</keyword>
<dbReference type="EC" id="3.1.4.14" evidence="1"/>
<dbReference type="EMBL" id="AL513382">
    <property type="protein sequence ID" value="CAD08859.1"/>
    <property type="molecule type" value="Genomic_DNA"/>
</dbReference>
<dbReference type="EMBL" id="AE014613">
    <property type="protein sequence ID" value="AAO70050.1"/>
    <property type="molecule type" value="Genomic_DNA"/>
</dbReference>
<dbReference type="RefSeq" id="NP_454998.1">
    <property type="nucleotide sequence ID" value="NC_003198.1"/>
</dbReference>
<dbReference type="RefSeq" id="WP_001009858.1">
    <property type="nucleotide sequence ID" value="NZ_WSUR01000026.1"/>
</dbReference>
<dbReference type="SMR" id="Q8XEZ8"/>
<dbReference type="STRING" id="220341.gene:17584464"/>
<dbReference type="KEGG" id="stt:t2460"/>
<dbReference type="KEGG" id="sty:STY0441"/>
<dbReference type="PATRIC" id="fig|220341.7.peg.439"/>
<dbReference type="eggNOG" id="COG3124">
    <property type="taxonomic scope" value="Bacteria"/>
</dbReference>
<dbReference type="HOGENOM" id="CLU_099370_1_0_6"/>
<dbReference type="OMA" id="MNFLAHI"/>
<dbReference type="OrthoDB" id="8442777at2"/>
<dbReference type="Proteomes" id="UP000000541">
    <property type="component" value="Chromosome"/>
</dbReference>
<dbReference type="Proteomes" id="UP000002670">
    <property type="component" value="Chromosome"/>
</dbReference>
<dbReference type="GO" id="GO:0008770">
    <property type="term" value="F:[acyl-carrier-protein] phosphodiesterase activity"/>
    <property type="evidence" value="ECO:0007669"/>
    <property type="project" value="UniProtKB-UniRule"/>
</dbReference>
<dbReference type="GO" id="GO:0006633">
    <property type="term" value="P:fatty acid biosynthetic process"/>
    <property type="evidence" value="ECO:0007669"/>
    <property type="project" value="UniProtKB-UniRule"/>
</dbReference>
<dbReference type="HAMAP" id="MF_01950">
    <property type="entry name" value="AcpH"/>
    <property type="match status" value="1"/>
</dbReference>
<dbReference type="InterPro" id="IPR007431">
    <property type="entry name" value="ACP_PD"/>
</dbReference>
<dbReference type="InterPro" id="IPR023491">
    <property type="entry name" value="ACP_phosphodiesterase_gpbac"/>
</dbReference>
<dbReference type="NCBIfam" id="NF007466">
    <property type="entry name" value="PRK10045.1"/>
    <property type="match status" value="1"/>
</dbReference>
<dbReference type="PANTHER" id="PTHR38764">
    <property type="entry name" value="ACYL CARRIER PROTEIN PHOSPHODIESTERASE"/>
    <property type="match status" value="1"/>
</dbReference>
<dbReference type="PANTHER" id="PTHR38764:SF1">
    <property type="entry name" value="ACYL CARRIER PROTEIN PHOSPHODIESTERASE"/>
    <property type="match status" value="1"/>
</dbReference>
<dbReference type="Pfam" id="PF04336">
    <property type="entry name" value="ACP_PD"/>
    <property type="match status" value="1"/>
</dbReference>
<dbReference type="PIRSF" id="PIRSF011489">
    <property type="entry name" value="DUF479"/>
    <property type="match status" value="1"/>
</dbReference>
<name>ACPH_SALTI</name>
<gene>
    <name evidence="1" type="primary">acpH</name>
    <name type="ordered locus">STY0441</name>
    <name type="ordered locus">t2460</name>
</gene>
<reference key="1">
    <citation type="journal article" date="2001" name="Nature">
        <title>Complete genome sequence of a multiple drug resistant Salmonella enterica serovar Typhi CT18.</title>
        <authorList>
            <person name="Parkhill J."/>
            <person name="Dougan G."/>
            <person name="James K.D."/>
            <person name="Thomson N.R."/>
            <person name="Pickard D."/>
            <person name="Wain J."/>
            <person name="Churcher C.M."/>
            <person name="Mungall K.L."/>
            <person name="Bentley S.D."/>
            <person name="Holden M.T.G."/>
            <person name="Sebaihia M."/>
            <person name="Baker S."/>
            <person name="Basham D."/>
            <person name="Brooks K."/>
            <person name="Chillingworth T."/>
            <person name="Connerton P."/>
            <person name="Cronin A."/>
            <person name="Davis P."/>
            <person name="Davies R.M."/>
            <person name="Dowd L."/>
            <person name="White N."/>
            <person name="Farrar J."/>
            <person name="Feltwell T."/>
            <person name="Hamlin N."/>
            <person name="Haque A."/>
            <person name="Hien T.T."/>
            <person name="Holroyd S."/>
            <person name="Jagels K."/>
            <person name="Krogh A."/>
            <person name="Larsen T.S."/>
            <person name="Leather S."/>
            <person name="Moule S."/>
            <person name="O'Gaora P."/>
            <person name="Parry C."/>
            <person name="Quail M.A."/>
            <person name="Rutherford K.M."/>
            <person name="Simmonds M."/>
            <person name="Skelton J."/>
            <person name="Stevens K."/>
            <person name="Whitehead S."/>
            <person name="Barrell B.G."/>
        </authorList>
    </citation>
    <scope>NUCLEOTIDE SEQUENCE [LARGE SCALE GENOMIC DNA]</scope>
    <source>
        <strain>CT18</strain>
    </source>
</reference>
<reference key="2">
    <citation type="journal article" date="2003" name="J. Bacteriol.">
        <title>Comparative genomics of Salmonella enterica serovar Typhi strains Ty2 and CT18.</title>
        <authorList>
            <person name="Deng W."/>
            <person name="Liou S.-R."/>
            <person name="Plunkett G. III"/>
            <person name="Mayhew G.F."/>
            <person name="Rose D.J."/>
            <person name="Burland V."/>
            <person name="Kodoyianni V."/>
            <person name="Schwartz D.C."/>
            <person name="Blattner F.R."/>
        </authorList>
    </citation>
    <scope>NUCLEOTIDE SEQUENCE [LARGE SCALE GENOMIC DNA]</scope>
    <source>
        <strain>ATCC 700931 / Ty2</strain>
    </source>
</reference>
<organism>
    <name type="scientific">Salmonella typhi</name>
    <dbReference type="NCBI Taxonomy" id="90370"/>
    <lineage>
        <taxon>Bacteria</taxon>
        <taxon>Pseudomonadati</taxon>
        <taxon>Pseudomonadota</taxon>
        <taxon>Gammaproteobacteria</taxon>
        <taxon>Enterobacterales</taxon>
        <taxon>Enterobacteriaceae</taxon>
        <taxon>Salmonella</taxon>
    </lineage>
</organism>
<comment type="function">
    <text evidence="1">Converts holo-ACP to apo-ACP by hydrolytic cleavage of the phosphopantetheine prosthetic group from ACP.</text>
</comment>
<comment type="catalytic activity">
    <reaction evidence="1">
        <text>holo-[ACP] + H2O = apo-[ACP] + (R)-4'-phosphopantetheine + H(+)</text>
        <dbReference type="Rhea" id="RHEA:20537"/>
        <dbReference type="Rhea" id="RHEA-COMP:9685"/>
        <dbReference type="Rhea" id="RHEA-COMP:9690"/>
        <dbReference type="ChEBI" id="CHEBI:15377"/>
        <dbReference type="ChEBI" id="CHEBI:15378"/>
        <dbReference type="ChEBI" id="CHEBI:29999"/>
        <dbReference type="ChEBI" id="CHEBI:61723"/>
        <dbReference type="ChEBI" id="CHEBI:64479"/>
        <dbReference type="EC" id="3.1.4.14"/>
    </reaction>
</comment>
<comment type="similarity">
    <text evidence="1">Belongs to the AcpH family.</text>
</comment>
<feature type="chain" id="PRO_0000226272" description="Acyl carrier protein phosphodiesterase">
    <location>
        <begin position="1"/>
        <end position="193"/>
    </location>
</feature>
<protein>
    <recommendedName>
        <fullName evidence="1">Acyl carrier protein phosphodiesterase</fullName>
        <shortName evidence="1">ACP phosphodiesterase</shortName>
        <ecNumber evidence="1">3.1.4.14</ecNumber>
    </recommendedName>
</protein>
<proteinExistence type="inferred from homology"/>